<protein>
    <recommendedName>
        <fullName>Transcription initiation factor IIA subunit 2</fullName>
    </recommendedName>
    <alternativeName>
        <fullName>General transcription factor IIA subunit 2</fullName>
    </alternativeName>
    <alternativeName>
        <fullName>TFIIA 13.5 kDa subunit</fullName>
    </alternativeName>
    <alternativeName>
        <fullName>Transcription initiation factor IIA small chain</fullName>
    </alternativeName>
    <alternativeName>
        <fullName>Transcription initiation factor IIA small subunit</fullName>
    </alternativeName>
</protein>
<sequence>MAVPGYYELYRRSTIGNSLVDALDTLISDGRIEASLAMRVLETFDKVVAETLKDNTQSKLTVKGNLDTYGFCDDVWTFIVKNCQVTVEDSHRDASQNGSGDSQSVISVDKLRIVACNSKKSE</sequence>
<reference key="1">
    <citation type="journal article" date="1992" name="Science">
        <title>Isolation of two genes that encode subunits of the yeast transcription factor IIA.</title>
        <authorList>
            <person name="Ranish J.A."/>
            <person name="Lane W.S."/>
            <person name="Hahn S."/>
        </authorList>
    </citation>
    <scope>NUCLEOTIDE SEQUENCE [GENOMIC DNA]</scope>
    <scope>PROTEIN SEQUENCE OF 15-30 AND 40-58</scope>
</reference>
<reference key="2">
    <citation type="journal article" date="1994" name="Yeast">
        <title>Sequence of a 28.6 kb region of yeast chromosome XI includes the FBA1 and TOA2 genes, an open reading frame (ORF) similar to a translationally controlled tumour protein, one ORF containing motifs also found in plant storage proteins and 13 ORFs with weak or no homology to known proteins.</title>
        <authorList>
            <person name="Rasmussen S.W."/>
        </authorList>
    </citation>
    <scope>NUCLEOTIDE SEQUENCE [GENOMIC DNA]</scope>
    <source>
        <strain>ATCC 204508 / S288c</strain>
    </source>
</reference>
<reference key="3">
    <citation type="journal article" date="1994" name="Nature">
        <title>Complete DNA sequence of yeast chromosome XI.</title>
        <authorList>
            <person name="Dujon B."/>
            <person name="Alexandraki D."/>
            <person name="Andre B."/>
            <person name="Ansorge W."/>
            <person name="Baladron V."/>
            <person name="Ballesta J.P.G."/>
            <person name="Banrevi A."/>
            <person name="Bolle P.-A."/>
            <person name="Bolotin-Fukuhara M."/>
            <person name="Bossier P."/>
            <person name="Bou G."/>
            <person name="Boyer J."/>
            <person name="Buitrago M.J."/>
            <person name="Cheret G."/>
            <person name="Colleaux L."/>
            <person name="Daignan-Fornier B."/>
            <person name="del Rey F."/>
            <person name="Dion C."/>
            <person name="Domdey H."/>
            <person name="Duesterhoeft A."/>
            <person name="Duesterhus S."/>
            <person name="Entian K.-D."/>
            <person name="Erfle H."/>
            <person name="Esteban P.F."/>
            <person name="Feldmann H."/>
            <person name="Fernandes L."/>
            <person name="Fobo G.M."/>
            <person name="Fritz C."/>
            <person name="Fukuhara H."/>
            <person name="Gabel C."/>
            <person name="Gaillon L."/>
            <person name="Garcia-Cantalejo J.M."/>
            <person name="Garcia-Ramirez J.J."/>
            <person name="Gent M.E."/>
            <person name="Ghazvini M."/>
            <person name="Goffeau A."/>
            <person name="Gonzalez A."/>
            <person name="Grothues D."/>
            <person name="Guerreiro P."/>
            <person name="Hegemann J.H."/>
            <person name="Hewitt N."/>
            <person name="Hilger F."/>
            <person name="Hollenberg C.P."/>
            <person name="Horaitis O."/>
            <person name="Indge K.J."/>
            <person name="Jacquier A."/>
            <person name="James C.M."/>
            <person name="Jauniaux J.-C."/>
            <person name="Jimenez A."/>
            <person name="Keuchel H."/>
            <person name="Kirchrath L."/>
            <person name="Kleine K."/>
            <person name="Koetter P."/>
            <person name="Legrain P."/>
            <person name="Liebl S."/>
            <person name="Louis E.J."/>
            <person name="Maia e Silva A."/>
            <person name="Marck C."/>
            <person name="Monnier A.-L."/>
            <person name="Moestl D."/>
            <person name="Mueller S."/>
            <person name="Obermaier B."/>
            <person name="Oliver S.G."/>
            <person name="Pallier C."/>
            <person name="Pascolo S."/>
            <person name="Pfeiffer F."/>
            <person name="Philippsen P."/>
            <person name="Planta R.J."/>
            <person name="Pohl F.M."/>
            <person name="Pohl T.M."/>
            <person name="Poehlmann R."/>
            <person name="Portetelle D."/>
            <person name="Purnelle B."/>
            <person name="Puzos V."/>
            <person name="Ramezani Rad M."/>
            <person name="Rasmussen S.W."/>
            <person name="Remacha M.A."/>
            <person name="Revuelta J.L."/>
            <person name="Richard G.-F."/>
            <person name="Rieger M."/>
            <person name="Rodrigues-Pousada C."/>
            <person name="Rose M."/>
            <person name="Rupp T."/>
            <person name="Santos M.A."/>
            <person name="Schwager C."/>
            <person name="Sensen C."/>
            <person name="Skala J."/>
            <person name="Soares H."/>
            <person name="Sor F."/>
            <person name="Stegemann J."/>
            <person name="Tettelin H."/>
            <person name="Thierry A."/>
            <person name="Tzermia M."/>
            <person name="Urrestarazu L.A."/>
            <person name="van Dyck L."/>
            <person name="van Vliet-Reedijk J.C."/>
            <person name="Valens M."/>
            <person name="Vandenbol M."/>
            <person name="Vilela C."/>
            <person name="Vissers S."/>
            <person name="von Wettstein D."/>
            <person name="Voss H."/>
            <person name="Wiemann S."/>
            <person name="Xu G."/>
            <person name="Zimmermann J."/>
            <person name="Haasemann M."/>
            <person name="Becker I."/>
            <person name="Mewes H.-W."/>
        </authorList>
    </citation>
    <scope>NUCLEOTIDE SEQUENCE [LARGE SCALE GENOMIC DNA]</scope>
    <source>
        <strain>ATCC 204508 / S288c</strain>
    </source>
</reference>
<reference key="4">
    <citation type="journal article" date="2014" name="G3 (Bethesda)">
        <title>The reference genome sequence of Saccharomyces cerevisiae: Then and now.</title>
        <authorList>
            <person name="Engel S.R."/>
            <person name="Dietrich F.S."/>
            <person name="Fisk D.G."/>
            <person name="Binkley G."/>
            <person name="Balakrishnan R."/>
            <person name="Costanzo M.C."/>
            <person name="Dwight S.S."/>
            <person name="Hitz B.C."/>
            <person name="Karra K."/>
            <person name="Nash R.S."/>
            <person name="Weng S."/>
            <person name="Wong E.D."/>
            <person name="Lloyd P."/>
            <person name="Skrzypek M.S."/>
            <person name="Miyasato S.R."/>
            <person name="Simison M."/>
            <person name="Cherry J.M."/>
        </authorList>
    </citation>
    <scope>GENOME REANNOTATION</scope>
    <source>
        <strain>ATCC 204508 / S288c</strain>
    </source>
</reference>
<reference key="5">
    <citation type="journal article" date="2007" name="Genome Res.">
        <title>Approaching a complete repository of sequence-verified protein-encoding clones for Saccharomyces cerevisiae.</title>
        <authorList>
            <person name="Hu Y."/>
            <person name="Rolfs A."/>
            <person name="Bhullar B."/>
            <person name="Murthy T.V.S."/>
            <person name="Zhu C."/>
            <person name="Berger M.F."/>
            <person name="Camargo A.A."/>
            <person name="Kelley F."/>
            <person name="McCarron S."/>
            <person name="Jepson D."/>
            <person name="Richardson A."/>
            <person name="Raphael J."/>
            <person name="Moreira D."/>
            <person name="Taycher E."/>
            <person name="Zuo D."/>
            <person name="Mohr S."/>
            <person name="Kane M.F."/>
            <person name="Williamson J."/>
            <person name="Simpson A.J.G."/>
            <person name="Bulyk M.L."/>
            <person name="Harlow E."/>
            <person name="Marsischky G."/>
            <person name="Kolodner R.D."/>
            <person name="LaBaer J."/>
        </authorList>
    </citation>
    <scope>NUCLEOTIDE SEQUENCE [GENOMIC DNA]</scope>
    <source>
        <strain>ATCC 204508 / S288c</strain>
    </source>
</reference>
<reference key="6">
    <citation type="journal article" date="1991" name="J. Biol. Chem.">
        <title>The yeast general transcription factor TFIIA is composed of two polypeptide subunits.</title>
        <authorList>
            <person name="Ranish J.A."/>
            <person name="Hahn S."/>
        </authorList>
    </citation>
    <scope>FUNCTION</scope>
    <scope>SUBUNIT</scope>
</reference>
<reference key="7">
    <citation type="journal article" date="1999" name="J. Cell Biol.">
        <title>The karyopherin Kap122p/Pdr6p imports both subunits of the transcription factor IIA into the nucleus.</title>
        <authorList>
            <person name="Titov A.A."/>
            <person name="Blobel G."/>
        </authorList>
    </citation>
    <scope>INTERACTION WITH KAP122 AND TOA1</scope>
    <scope>SUBCELLULAR LOCATION</scope>
</reference>
<reference key="8">
    <citation type="journal article" date="2001" name="Mol. Cell. Biol.">
        <title>TFIIA interacts with TFIID via association with TATA-binding protein and TAF40.</title>
        <authorList>
            <person name="Kraemer S.M."/>
            <person name="Ranallo R.T."/>
            <person name="Ogg R.C."/>
            <person name="Stargell L.A."/>
        </authorList>
    </citation>
    <scope>MUTAGENESIS OF ILE-27 AND LEU-41</scope>
    <scope>INTERACTION WITH TAF11</scope>
</reference>
<reference key="9">
    <citation type="journal article" date="2003" name="Nature">
        <title>Global analysis of protein expression in yeast.</title>
        <authorList>
            <person name="Ghaemmaghami S."/>
            <person name="Huh W.-K."/>
            <person name="Bower K."/>
            <person name="Howson R.W."/>
            <person name="Belle A."/>
            <person name="Dephoure N."/>
            <person name="O'Shea E.K."/>
            <person name="Weissman J.S."/>
        </authorList>
    </citation>
    <scope>LEVEL OF PROTEIN EXPRESSION [LARGE SCALE ANALYSIS]</scope>
</reference>
<reference key="10">
    <citation type="journal article" date="2008" name="Mol. Cell. Proteomics">
        <title>A multidimensional chromatography technology for in-depth phosphoproteome analysis.</title>
        <authorList>
            <person name="Albuquerque C.P."/>
            <person name="Smolka M.B."/>
            <person name="Payne S.H."/>
            <person name="Bafna V."/>
            <person name="Eng J."/>
            <person name="Zhou H."/>
        </authorList>
    </citation>
    <scope>PHOSPHORYLATION [LARGE SCALE ANALYSIS] AT SER-95 AND SER-102</scope>
    <scope>IDENTIFICATION BY MASS SPECTROMETRY [LARGE SCALE ANALYSIS]</scope>
</reference>
<reference key="11">
    <citation type="journal article" date="2009" name="Science">
        <title>Global analysis of Cdk1 substrate phosphorylation sites provides insights into evolution.</title>
        <authorList>
            <person name="Holt L.J."/>
            <person name="Tuch B.B."/>
            <person name="Villen J."/>
            <person name="Johnson A.D."/>
            <person name="Gygi S.P."/>
            <person name="Morgan D.O."/>
        </authorList>
    </citation>
    <scope>PHOSPHORYLATION [LARGE SCALE ANALYSIS] AT SER-95</scope>
    <scope>IDENTIFICATION BY MASS SPECTROMETRY [LARGE SCALE ANALYSIS]</scope>
</reference>
<reference key="12">
    <citation type="journal article" date="1996" name="Nature">
        <title>Crystal structure of a yeast TFIIA/TBP/DNA complex.</title>
        <authorList>
            <person name="Tan S."/>
            <person name="Hunziker Y."/>
            <person name="Sargent D.F."/>
            <person name="Richmond T.J."/>
        </authorList>
    </citation>
    <scope>X-RAY CRYSTALLOGRAPHY (2.5 ANGSTROMS) IN COMPLEX WITH TOA1; TBP AND DNA</scope>
</reference>
<feature type="chain" id="PRO_0000194053" description="Transcription initiation factor IIA subunit 2">
    <location>
        <begin position="1"/>
        <end position="122"/>
    </location>
</feature>
<feature type="modified residue" description="Phosphoserine" evidence="7 8">
    <location>
        <position position="95"/>
    </location>
</feature>
<feature type="modified residue" description="Phosphoserine" evidence="7">
    <location>
        <position position="102"/>
    </location>
</feature>
<feature type="mutagenesis site" description="Decreases ability to interact with TAF11 and support growth on galactose-containing medium. Unable to support cell viability in a strain deleted for TOA2; when associated with A-69." evidence="2">
    <original>I</original>
    <variation>A</variation>
    <variation>K</variation>
    <location>
        <position position="27"/>
    </location>
</feature>
<feature type="mutagenesis site" description="Decreases ability to interact with Toa1 and TAF11, display mutant growth phenotypes and defects in transcription in vivo." evidence="2">
    <original>L</original>
    <variation>D</variation>
    <location>
        <position position="41"/>
    </location>
</feature>
<feature type="mutagenesis site" description="Unable to support cell viability in a strain deleted for TOA2; when associated with A-27 or K-27.">
    <original>Y</original>
    <variation>A</variation>
    <location>
        <position position="69"/>
    </location>
</feature>
<feature type="helix" evidence="9">
    <location>
        <begin position="9"/>
        <end position="12"/>
    </location>
</feature>
<feature type="helix" evidence="9">
    <location>
        <begin position="14"/>
        <end position="28"/>
    </location>
</feature>
<feature type="helix" evidence="9">
    <location>
        <begin position="34"/>
        <end position="54"/>
    </location>
</feature>
<feature type="strand" evidence="9">
    <location>
        <begin position="59"/>
        <end position="72"/>
    </location>
</feature>
<feature type="strand" evidence="9">
    <location>
        <begin position="75"/>
        <end position="88"/>
    </location>
</feature>
<feature type="strand" evidence="9">
    <location>
        <begin position="104"/>
        <end position="119"/>
    </location>
</feature>
<dbReference type="EMBL" id="M85249">
    <property type="protein sequence ID" value="AAA19653.1"/>
    <property type="molecule type" value="Unassigned_DNA"/>
</dbReference>
<dbReference type="EMBL" id="X75781">
    <property type="protein sequence ID" value="CAA53423.1"/>
    <property type="molecule type" value="Genomic_DNA"/>
</dbReference>
<dbReference type="EMBL" id="Z28058">
    <property type="protein sequence ID" value="CAA81895.1"/>
    <property type="molecule type" value="Genomic_DNA"/>
</dbReference>
<dbReference type="EMBL" id="AY557890">
    <property type="protein sequence ID" value="AAS56216.1"/>
    <property type="molecule type" value="Genomic_DNA"/>
</dbReference>
<dbReference type="EMBL" id="BK006944">
    <property type="protein sequence ID" value="DAA09099.1"/>
    <property type="molecule type" value="Genomic_DNA"/>
</dbReference>
<dbReference type="PIR" id="A41810">
    <property type="entry name" value="A41810"/>
</dbReference>
<dbReference type="RefSeq" id="NP_012865.1">
    <property type="nucleotide sequence ID" value="NM_001179624.1"/>
</dbReference>
<dbReference type="PDB" id="1NH2">
    <property type="method" value="X-ray"/>
    <property type="resolution" value="1.90 A"/>
    <property type="chains" value="D=2-122"/>
</dbReference>
<dbReference type="PDB" id="1RM1">
    <property type="method" value="X-ray"/>
    <property type="resolution" value="2.50 A"/>
    <property type="chains" value="B=1-122"/>
</dbReference>
<dbReference type="PDB" id="1YTF">
    <property type="method" value="X-ray"/>
    <property type="resolution" value="2.50 A"/>
    <property type="chains" value="D=2-122"/>
</dbReference>
<dbReference type="PDB" id="5FMF">
    <property type="method" value="EM"/>
    <property type="resolution" value="6.00 A"/>
    <property type="chains" value="O=1-122"/>
</dbReference>
<dbReference type="PDB" id="5FYW">
    <property type="method" value="EM"/>
    <property type="resolution" value="4.35 A"/>
    <property type="chains" value="V=1-122"/>
</dbReference>
<dbReference type="PDB" id="5FZ5">
    <property type="method" value="EM"/>
    <property type="resolution" value="8.80 A"/>
    <property type="chains" value="V=1-122"/>
</dbReference>
<dbReference type="PDB" id="5OQJ">
    <property type="method" value="EM"/>
    <property type="resolution" value="4.70 A"/>
    <property type="chains" value="V=1-122"/>
</dbReference>
<dbReference type="PDB" id="5OQM">
    <property type="method" value="EM"/>
    <property type="resolution" value="5.80 A"/>
    <property type="chains" value="V=1-122"/>
</dbReference>
<dbReference type="PDB" id="5SVA">
    <property type="method" value="EM"/>
    <property type="resolution" value="15.30 A"/>
    <property type="chains" value="e=1-122"/>
</dbReference>
<dbReference type="PDB" id="6GYK">
    <property type="method" value="EM"/>
    <property type="resolution" value="5.10 A"/>
    <property type="chains" value="V=1-122"/>
</dbReference>
<dbReference type="PDB" id="6GYL">
    <property type="method" value="EM"/>
    <property type="resolution" value="4.80 A"/>
    <property type="chains" value="V=1-122"/>
</dbReference>
<dbReference type="PDB" id="6GYM">
    <property type="method" value="EM"/>
    <property type="resolution" value="6.70 A"/>
    <property type="chains" value="V=1-122"/>
</dbReference>
<dbReference type="PDB" id="7ML1">
    <property type="method" value="EM"/>
    <property type="resolution" value="4.00 A"/>
    <property type="chains" value="V=1-122"/>
</dbReference>
<dbReference type="PDB" id="7ML2">
    <property type="method" value="EM"/>
    <property type="resolution" value="3.40 A"/>
    <property type="chains" value="V=1-122"/>
</dbReference>
<dbReference type="PDB" id="7ML4">
    <property type="method" value="EM"/>
    <property type="resolution" value="3.10 A"/>
    <property type="chains" value="V=1-122"/>
</dbReference>
<dbReference type="PDB" id="7O4I">
    <property type="method" value="EM"/>
    <property type="resolution" value="3.20 A"/>
    <property type="chains" value="V=1-122"/>
</dbReference>
<dbReference type="PDB" id="7O4J">
    <property type="method" value="EM"/>
    <property type="resolution" value="2.90 A"/>
    <property type="chains" value="V=1-122"/>
</dbReference>
<dbReference type="PDB" id="7O72">
    <property type="method" value="EM"/>
    <property type="resolution" value="3.40 A"/>
    <property type="chains" value="V=1-122"/>
</dbReference>
<dbReference type="PDB" id="7O73">
    <property type="method" value="EM"/>
    <property type="resolution" value="3.40 A"/>
    <property type="chains" value="V=1-122"/>
</dbReference>
<dbReference type="PDB" id="7O75">
    <property type="method" value="EM"/>
    <property type="resolution" value="3.20 A"/>
    <property type="chains" value="V=1-122"/>
</dbReference>
<dbReference type="PDB" id="7OH9">
    <property type="method" value="EM"/>
    <property type="resolution" value="3.00 A"/>
    <property type="chains" value="M=1-122"/>
</dbReference>
<dbReference type="PDB" id="7OHA">
    <property type="method" value="EM"/>
    <property type="resolution" value="2.90 A"/>
    <property type="chains" value="M=1-122"/>
</dbReference>
<dbReference type="PDB" id="7ZS9">
    <property type="method" value="EM"/>
    <property type="resolution" value="3.10 A"/>
    <property type="chains" value="V=1-122"/>
</dbReference>
<dbReference type="PDB" id="7ZSA">
    <property type="method" value="EM"/>
    <property type="resolution" value="4.00 A"/>
    <property type="chains" value="V=1-122"/>
</dbReference>
<dbReference type="PDB" id="7ZSB">
    <property type="method" value="EM"/>
    <property type="resolution" value="6.60 A"/>
    <property type="chains" value="V=1-122"/>
</dbReference>
<dbReference type="PDB" id="8CEN">
    <property type="method" value="EM"/>
    <property type="resolution" value="3.00 A"/>
    <property type="chains" value="V=1-122"/>
</dbReference>
<dbReference type="PDB" id="8CEO">
    <property type="method" value="EM"/>
    <property type="resolution" value="3.60 A"/>
    <property type="chains" value="V=1-122"/>
</dbReference>
<dbReference type="PDB" id="8UMH">
    <property type="method" value="EM"/>
    <property type="resolution" value="4.10 A"/>
    <property type="chains" value="V=1-122"/>
</dbReference>
<dbReference type="PDB" id="8UMI">
    <property type="method" value="EM"/>
    <property type="resolution" value="3.70 A"/>
    <property type="chains" value="V=1-122"/>
</dbReference>
<dbReference type="PDB" id="8UOQ">
    <property type="method" value="EM"/>
    <property type="resolution" value="3.80 A"/>
    <property type="chains" value="V=1-122"/>
</dbReference>
<dbReference type="PDB" id="8UOT">
    <property type="method" value="EM"/>
    <property type="resolution" value="3.70 A"/>
    <property type="chains" value="V=1-122"/>
</dbReference>
<dbReference type="PDBsum" id="1NH2"/>
<dbReference type="PDBsum" id="1RM1"/>
<dbReference type="PDBsum" id="1YTF"/>
<dbReference type="PDBsum" id="5FMF"/>
<dbReference type="PDBsum" id="5FYW"/>
<dbReference type="PDBsum" id="5FZ5"/>
<dbReference type="PDBsum" id="5OQJ"/>
<dbReference type="PDBsum" id="5OQM"/>
<dbReference type="PDBsum" id="5SVA"/>
<dbReference type="PDBsum" id="6GYK"/>
<dbReference type="PDBsum" id="6GYL"/>
<dbReference type="PDBsum" id="6GYM"/>
<dbReference type="PDBsum" id="7ML1"/>
<dbReference type="PDBsum" id="7ML2"/>
<dbReference type="PDBsum" id="7ML4"/>
<dbReference type="PDBsum" id="7O4I"/>
<dbReference type="PDBsum" id="7O4J"/>
<dbReference type="PDBsum" id="7O72"/>
<dbReference type="PDBsum" id="7O73"/>
<dbReference type="PDBsum" id="7O75"/>
<dbReference type="PDBsum" id="7OH9"/>
<dbReference type="PDBsum" id="7OHA"/>
<dbReference type="PDBsum" id="7ZS9"/>
<dbReference type="PDBsum" id="7ZSA"/>
<dbReference type="PDBsum" id="7ZSB"/>
<dbReference type="PDBsum" id="8CEN"/>
<dbReference type="PDBsum" id="8CEO"/>
<dbReference type="PDBsum" id="8UMH"/>
<dbReference type="PDBsum" id="8UMI"/>
<dbReference type="PDBsum" id="8UOQ"/>
<dbReference type="PDBsum" id="8UOT"/>
<dbReference type="EMDB" id="EMD-0090"/>
<dbReference type="EMDB" id="EMD-0091"/>
<dbReference type="EMDB" id="EMD-0092"/>
<dbReference type="EMDB" id="EMD-12719"/>
<dbReference type="EMDB" id="EMD-12720"/>
<dbReference type="EMDB" id="EMD-12743"/>
<dbReference type="EMDB" id="EMD-12744"/>
<dbReference type="EMDB" id="EMD-12745"/>
<dbReference type="EMDB" id="EMD-14927"/>
<dbReference type="EMDB" id="EMD-14928"/>
<dbReference type="EMDB" id="EMD-14929"/>
<dbReference type="EMDB" id="EMD-3846"/>
<dbReference type="EMDB" id="EMD-3850"/>
<dbReference type="EMDB" id="EMD-42437"/>
<dbReference type="EMDB" id="EMD-42438"/>
<dbReference type="EMDB" id="EMD-8305"/>
<dbReference type="SMR" id="P32774"/>
<dbReference type="BioGRID" id="34075">
    <property type="interactions" value="40"/>
</dbReference>
<dbReference type="ComplexPortal" id="CPX-1633">
    <property type="entry name" value="Transcription factor TFIIA complex"/>
</dbReference>
<dbReference type="DIP" id="DIP-2348N"/>
<dbReference type="FunCoup" id="P32774">
    <property type="interactions" value="617"/>
</dbReference>
<dbReference type="IntAct" id="P32774">
    <property type="interactions" value="9"/>
</dbReference>
<dbReference type="MINT" id="P32774"/>
<dbReference type="STRING" id="4932.YKL058W"/>
<dbReference type="iPTMnet" id="P32774"/>
<dbReference type="PaxDb" id="4932-YKL058W"/>
<dbReference type="PeptideAtlas" id="P32774"/>
<dbReference type="EnsemblFungi" id="YKL058W_mRNA">
    <property type="protein sequence ID" value="YKL058W"/>
    <property type="gene ID" value="YKL058W"/>
</dbReference>
<dbReference type="GeneID" id="853807"/>
<dbReference type="KEGG" id="sce:YKL058W"/>
<dbReference type="AGR" id="SGD:S000001541"/>
<dbReference type="SGD" id="S000001541">
    <property type="gene designation" value="TOA2"/>
</dbReference>
<dbReference type="VEuPathDB" id="FungiDB:YKL058W"/>
<dbReference type="eggNOG" id="KOG3463">
    <property type="taxonomic scope" value="Eukaryota"/>
</dbReference>
<dbReference type="GeneTree" id="ENSGT00390000014572"/>
<dbReference type="HOGENOM" id="CLU_112964_3_1_1"/>
<dbReference type="InParanoid" id="P32774"/>
<dbReference type="OMA" id="QYYELYR"/>
<dbReference type="OrthoDB" id="586585at2759"/>
<dbReference type="BioCyc" id="YEAST:G3O-31857-MONOMER"/>
<dbReference type="Reactome" id="R-SCE-674695">
    <property type="pathway name" value="RNA Polymerase II Pre-transcription Events"/>
</dbReference>
<dbReference type="Reactome" id="R-SCE-6807505">
    <property type="pathway name" value="RNA polymerase II transcribes snRNA genes"/>
</dbReference>
<dbReference type="Reactome" id="R-SCE-73776">
    <property type="pathway name" value="RNA Polymerase II Promoter Escape"/>
</dbReference>
<dbReference type="Reactome" id="R-SCE-73779">
    <property type="pathway name" value="RNA Polymerase II Transcription Pre-Initiation And Promoter Opening"/>
</dbReference>
<dbReference type="Reactome" id="R-SCE-75953">
    <property type="pathway name" value="RNA Polymerase II Transcription Initiation"/>
</dbReference>
<dbReference type="Reactome" id="R-SCE-76042">
    <property type="pathway name" value="RNA Polymerase II Transcription Initiation And Promoter Clearance"/>
</dbReference>
<dbReference type="Reactome" id="R-SCE-9018519">
    <property type="pathway name" value="Estrogen-dependent gene expression"/>
</dbReference>
<dbReference type="BioGRID-ORCS" id="853807">
    <property type="hits" value="1 hit in 10 CRISPR screens"/>
</dbReference>
<dbReference type="EvolutionaryTrace" id="P32774"/>
<dbReference type="PRO" id="PR:P32774"/>
<dbReference type="Proteomes" id="UP000002311">
    <property type="component" value="Chromosome XI"/>
</dbReference>
<dbReference type="RNAct" id="P32774">
    <property type="molecule type" value="protein"/>
</dbReference>
<dbReference type="GO" id="GO:0005737">
    <property type="term" value="C:cytoplasm"/>
    <property type="evidence" value="ECO:0007669"/>
    <property type="project" value="UniProtKB-SubCell"/>
</dbReference>
<dbReference type="GO" id="GO:0005634">
    <property type="term" value="C:nucleus"/>
    <property type="evidence" value="ECO:0000314"/>
    <property type="project" value="ComplexPortal"/>
</dbReference>
<dbReference type="GO" id="GO:0005672">
    <property type="term" value="C:transcription factor TFIIA complex"/>
    <property type="evidence" value="ECO:0000314"/>
    <property type="project" value="ComplexPortal"/>
</dbReference>
<dbReference type="GO" id="GO:0000979">
    <property type="term" value="F:RNA polymerase II core promoter sequence-specific DNA binding"/>
    <property type="evidence" value="ECO:0000315"/>
    <property type="project" value="CAFA"/>
</dbReference>
<dbReference type="GO" id="GO:0016251">
    <property type="term" value="F:RNA polymerase II general transcription initiation factor activity"/>
    <property type="evidence" value="ECO:0000318"/>
    <property type="project" value="GO_Central"/>
</dbReference>
<dbReference type="GO" id="GO:0017025">
    <property type="term" value="F:TBP-class protein binding"/>
    <property type="evidence" value="ECO:0000353"/>
    <property type="project" value="CAFA"/>
</dbReference>
<dbReference type="GO" id="GO:0045944">
    <property type="term" value="P:positive regulation of transcription by RNA polymerase II"/>
    <property type="evidence" value="ECO:0000314"/>
    <property type="project" value="ComplexPortal"/>
</dbReference>
<dbReference type="GO" id="GO:0060261">
    <property type="term" value="P:positive regulation of transcription initiation by RNA polymerase II"/>
    <property type="evidence" value="ECO:0000314"/>
    <property type="project" value="ComplexPortal"/>
</dbReference>
<dbReference type="GO" id="GO:0051123">
    <property type="term" value="P:RNA polymerase II preinitiation complex assembly"/>
    <property type="evidence" value="ECO:0000314"/>
    <property type="project" value="SGD"/>
</dbReference>
<dbReference type="GO" id="GO:0006367">
    <property type="term" value="P:transcription initiation at RNA polymerase II promoter"/>
    <property type="evidence" value="ECO:0000314"/>
    <property type="project" value="SGD"/>
</dbReference>
<dbReference type="CDD" id="cd10014">
    <property type="entry name" value="TFIIA_gamma_C"/>
    <property type="match status" value="1"/>
</dbReference>
<dbReference type="CDD" id="cd10145">
    <property type="entry name" value="TFIIA_gamma_N"/>
    <property type="match status" value="1"/>
</dbReference>
<dbReference type="DisProt" id="DP00009"/>
<dbReference type="FunFam" id="1.10.287.190:FF:000001">
    <property type="entry name" value="Transcription initiation factor IIA subunit 2"/>
    <property type="match status" value="1"/>
</dbReference>
<dbReference type="FunFam" id="2.30.18.10:FF:000009">
    <property type="entry name" value="Transcription initiation factor IIA subunit 2"/>
    <property type="match status" value="1"/>
</dbReference>
<dbReference type="Gene3D" id="2.30.18.10">
    <property type="entry name" value="Transcription factor IIA (TFIIA), beta-barrel domain"/>
    <property type="match status" value="1"/>
</dbReference>
<dbReference type="Gene3D" id="1.10.287.190">
    <property type="entry name" value="Transcription factor IIA gamma subunit, alpha-helical domain"/>
    <property type="match status" value="1"/>
</dbReference>
<dbReference type="InterPro" id="IPR009083">
    <property type="entry name" value="TFIIA_a-hlx"/>
</dbReference>
<dbReference type="InterPro" id="IPR009088">
    <property type="entry name" value="TFIIA_b-brl"/>
</dbReference>
<dbReference type="InterPro" id="IPR003194">
    <property type="entry name" value="TFIIA_gsu"/>
</dbReference>
<dbReference type="InterPro" id="IPR015871">
    <property type="entry name" value="TFIIA_gsu_C"/>
</dbReference>
<dbReference type="InterPro" id="IPR015872">
    <property type="entry name" value="TFIIA_gsu_N"/>
</dbReference>
<dbReference type="PANTHER" id="PTHR10966">
    <property type="entry name" value="TRANSCRIPTION INITIATION FACTOR IIA SUBUNIT 2"/>
    <property type="match status" value="1"/>
</dbReference>
<dbReference type="Pfam" id="PF02751">
    <property type="entry name" value="TFIIA_gamma_C"/>
    <property type="match status" value="1"/>
</dbReference>
<dbReference type="Pfam" id="PF02268">
    <property type="entry name" value="TFIIA_gamma_N"/>
    <property type="match status" value="1"/>
</dbReference>
<dbReference type="PIRSF" id="PIRSF009415">
    <property type="entry name" value="Hum_TFIIA_gamma"/>
    <property type="match status" value="1"/>
</dbReference>
<dbReference type="SUPFAM" id="SSF47396">
    <property type="entry name" value="Transcription factor IIA (TFIIA), alpha-helical domain"/>
    <property type="match status" value="1"/>
</dbReference>
<dbReference type="SUPFAM" id="SSF50784">
    <property type="entry name" value="Transcription factor IIA (TFIIA), beta-barrel domain"/>
    <property type="match status" value="1"/>
</dbReference>
<comment type="function">
    <text evidence="4">TFIIA is a component of the transcription machinery of RNA polymerase II and plays an important role in transcriptional activation. TFIIA in a complex with TBP mediates transcriptional activity.</text>
</comment>
<comment type="subunit">
    <text evidence="1 2 4 5">TFIIA is a heterodimer composed of the large TOA1 and a small TOA2 subunits. Interacts with TBP. Interacts with TAF11. Interacts with KAP122.</text>
</comment>
<comment type="interaction">
    <interactant intactId="EBI-19323">
        <id>P32774</id>
    </interactant>
    <interactant intactId="EBI-19129">
        <id>P13393</id>
        <label>SPT15</label>
    </interactant>
    <organismsDiffer>false</organismsDiffer>
    <experiments>2</experiments>
</comment>
<comment type="interaction">
    <interactant intactId="EBI-19323">
        <id>P32774</id>
    </interactant>
    <interactant intactId="EBI-19316">
        <id>P32773</id>
        <label>TOA1</label>
    </interactant>
    <organismsDiffer>false</organismsDiffer>
    <experiments>3</experiments>
</comment>
<comment type="subcellular location">
    <subcellularLocation>
        <location evidence="1">Cytoplasm</location>
    </subcellularLocation>
    <subcellularLocation>
        <location evidence="1">Nucleus</location>
    </subcellularLocation>
    <text>Imported to nucleus via interaction with KAP122.</text>
</comment>
<comment type="miscellaneous">
    <text evidence="3">Present with 3910 molecules/cell in log phase SD medium.</text>
</comment>
<comment type="similarity">
    <text evidence="6">Belongs to the TFIIA subunit 2 family.</text>
</comment>
<name>T2AG_YEAST</name>
<organism>
    <name type="scientific">Saccharomyces cerevisiae (strain ATCC 204508 / S288c)</name>
    <name type="common">Baker's yeast</name>
    <dbReference type="NCBI Taxonomy" id="559292"/>
    <lineage>
        <taxon>Eukaryota</taxon>
        <taxon>Fungi</taxon>
        <taxon>Dikarya</taxon>
        <taxon>Ascomycota</taxon>
        <taxon>Saccharomycotina</taxon>
        <taxon>Saccharomycetes</taxon>
        <taxon>Saccharomycetales</taxon>
        <taxon>Saccharomycetaceae</taxon>
        <taxon>Saccharomyces</taxon>
    </lineage>
</organism>
<accession>P32774</accession>
<accession>D6VXM9</accession>
<keyword id="KW-0002">3D-structure</keyword>
<keyword id="KW-0963">Cytoplasm</keyword>
<keyword id="KW-0903">Direct protein sequencing</keyword>
<keyword id="KW-0539">Nucleus</keyword>
<keyword id="KW-0597">Phosphoprotein</keyword>
<keyword id="KW-1185">Reference proteome</keyword>
<keyword id="KW-0804">Transcription</keyword>
<keyword id="KW-0805">Transcription regulation</keyword>
<gene>
    <name type="primary">TOA2</name>
    <name type="ordered locus">YKL058W</name>
</gene>
<evidence type="ECO:0000269" key="1">
    <source>
    </source>
</evidence>
<evidence type="ECO:0000269" key="2">
    <source>
    </source>
</evidence>
<evidence type="ECO:0000269" key="3">
    <source>
    </source>
</evidence>
<evidence type="ECO:0000269" key="4">
    <source>
    </source>
</evidence>
<evidence type="ECO:0000269" key="5">
    <source>
    </source>
</evidence>
<evidence type="ECO:0000305" key="6"/>
<evidence type="ECO:0007744" key="7">
    <source>
    </source>
</evidence>
<evidence type="ECO:0007744" key="8">
    <source>
    </source>
</evidence>
<evidence type="ECO:0007829" key="9">
    <source>
        <dbReference type="PDB" id="1NH2"/>
    </source>
</evidence>
<proteinExistence type="evidence at protein level"/>